<organism>
    <name type="scientific">Bos taurus</name>
    <name type="common">Bovine</name>
    <dbReference type="NCBI Taxonomy" id="9913"/>
    <lineage>
        <taxon>Eukaryota</taxon>
        <taxon>Metazoa</taxon>
        <taxon>Chordata</taxon>
        <taxon>Craniata</taxon>
        <taxon>Vertebrata</taxon>
        <taxon>Euteleostomi</taxon>
        <taxon>Mammalia</taxon>
        <taxon>Eutheria</taxon>
        <taxon>Laurasiatheria</taxon>
        <taxon>Artiodactyla</taxon>
        <taxon>Ruminantia</taxon>
        <taxon>Pecora</taxon>
        <taxon>Bovidae</taxon>
        <taxon>Bovinae</taxon>
        <taxon>Bos</taxon>
    </lineage>
</organism>
<protein>
    <recommendedName>
        <fullName>Nascent polypeptide-associated complex subunit alpha</fullName>
        <shortName>NAC-alpha</shortName>
    </recommendedName>
    <alternativeName>
        <fullName>Alpha-NAC</fullName>
    </alternativeName>
</protein>
<dbReference type="EMBL" id="BT021019">
    <property type="protein sequence ID" value="AAX09036.1"/>
    <property type="molecule type" value="mRNA"/>
</dbReference>
<dbReference type="EMBL" id="BC102357">
    <property type="protein sequence ID" value="AAI02358.1"/>
    <property type="molecule type" value="mRNA"/>
</dbReference>
<dbReference type="RefSeq" id="NP_001014916.1">
    <property type="nucleotide sequence ID" value="NM_001014916.4"/>
</dbReference>
<dbReference type="RefSeq" id="XP_005206634.1">
    <property type="nucleotide sequence ID" value="XM_005206577.4"/>
</dbReference>
<dbReference type="RefSeq" id="XP_005206635.1">
    <property type="nucleotide sequence ID" value="XM_005206578.2"/>
</dbReference>
<dbReference type="RefSeq" id="XP_015326573.1">
    <property type="nucleotide sequence ID" value="XM_015471087.1"/>
</dbReference>
<dbReference type="RefSeq" id="XP_024847421.1">
    <property type="nucleotide sequence ID" value="XM_024991653.2"/>
</dbReference>
<dbReference type="SMR" id="Q5E9A1"/>
<dbReference type="FunCoup" id="Q5E9A1">
    <property type="interactions" value="2236"/>
</dbReference>
<dbReference type="STRING" id="9913.ENSBTAP00000057643"/>
<dbReference type="PaxDb" id="9913-ENSBTAP00000014162"/>
<dbReference type="PeptideAtlas" id="Q5E9A1"/>
<dbReference type="Ensembl" id="ENSBTAT00000014162.4">
    <property type="protein sequence ID" value="ENSBTAP00000014162.2"/>
    <property type="gene ID" value="ENSBTAG00000010701.6"/>
</dbReference>
<dbReference type="GeneID" id="513312"/>
<dbReference type="KEGG" id="bta:513312"/>
<dbReference type="CTD" id="4666"/>
<dbReference type="VEuPathDB" id="HostDB:ENSBTAG00000010701"/>
<dbReference type="eggNOG" id="KOG2239">
    <property type="taxonomic scope" value="Eukaryota"/>
</dbReference>
<dbReference type="GeneTree" id="ENSGT00440000033468"/>
<dbReference type="HOGENOM" id="CLU_057806_1_2_1"/>
<dbReference type="InParanoid" id="Q5E9A1"/>
<dbReference type="OMA" id="SQKMIFA"/>
<dbReference type="OrthoDB" id="3169036at2759"/>
<dbReference type="TreeFam" id="TF313348"/>
<dbReference type="Proteomes" id="UP000009136">
    <property type="component" value="Chromosome 5"/>
</dbReference>
<dbReference type="Bgee" id="ENSBTAG00000010701">
    <property type="expression patterns" value="Expressed in oocyte and 104 other cell types or tissues"/>
</dbReference>
<dbReference type="GO" id="GO:0005737">
    <property type="term" value="C:cytoplasm"/>
    <property type="evidence" value="ECO:0000250"/>
    <property type="project" value="AgBase"/>
</dbReference>
<dbReference type="GO" id="GO:0005854">
    <property type="term" value="C:nascent polypeptide-associated complex"/>
    <property type="evidence" value="ECO:0007669"/>
    <property type="project" value="InterPro"/>
</dbReference>
<dbReference type="GO" id="GO:0005634">
    <property type="term" value="C:nucleus"/>
    <property type="evidence" value="ECO:0000250"/>
    <property type="project" value="AgBase"/>
</dbReference>
<dbReference type="GO" id="GO:0003677">
    <property type="term" value="F:DNA binding"/>
    <property type="evidence" value="ECO:0007669"/>
    <property type="project" value="UniProtKB-KW"/>
</dbReference>
<dbReference type="GO" id="GO:0017025">
    <property type="term" value="F:TBP-class protein binding"/>
    <property type="evidence" value="ECO:0000250"/>
    <property type="project" value="AgBase"/>
</dbReference>
<dbReference type="GO" id="GO:0003713">
    <property type="term" value="F:transcription coactivator activity"/>
    <property type="evidence" value="ECO:0000250"/>
    <property type="project" value="AgBase"/>
</dbReference>
<dbReference type="GO" id="GO:0051082">
    <property type="term" value="F:unfolded protein binding"/>
    <property type="evidence" value="ECO:0000318"/>
    <property type="project" value="GO_Central"/>
</dbReference>
<dbReference type="GO" id="GO:0006612">
    <property type="term" value="P:protein targeting to membrane"/>
    <property type="evidence" value="ECO:0000318"/>
    <property type="project" value="GO_Central"/>
</dbReference>
<dbReference type="GO" id="GO:0015031">
    <property type="term" value="P:protein transport"/>
    <property type="evidence" value="ECO:0007669"/>
    <property type="project" value="UniProtKB-KW"/>
</dbReference>
<dbReference type="CDD" id="cd22054">
    <property type="entry name" value="NAC_NACA"/>
    <property type="match status" value="1"/>
</dbReference>
<dbReference type="CDD" id="cd14415">
    <property type="entry name" value="UBA_NACA_NACP1"/>
    <property type="match status" value="1"/>
</dbReference>
<dbReference type="FunFam" id="2.20.70.30:FF:000002">
    <property type="entry name" value="Nascent polypeptide-associated complex (NAC), alpha subunit"/>
    <property type="match status" value="1"/>
</dbReference>
<dbReference type="FunFam" id="1.10.8.10:FF:000006">
    <property type="entry name" value="Putative nascent polypeptide-associated complex subunit alpha"/>
    <property type="match status" value="1"/>
</dbReference>
<dbReference type="Gene3D" id="1.10.8.10">
    <property type="entry name" value="DNA helicase RuvA subunit, C-terminal domain"/>
    <property type="match status" value="1"/>
</dbReference>
<dbReference type="Gene3D" id="2.20.70.30">
    <property type="entry name" value="Nascent polypeptide-associated complex domain"/>
    <property type="match status" value="1"/>
</dbReference>
<dbReference type="InterPro" id="IPR016641">
    <property type="entry name" value="EGD2/NACA0like"/>
</dbReference>
<dbReference type="InterPro" id="IPR044034">
    <property type="entry name" value="NAC-like_UBA"/>
</dbReference>
<dbReference type="InterPro" id="IPR038187">
    <property type="entry name" value="NAC_A/B_dom_sf"/>
</dbReference>
<dbReference type="InterPro" id="IPR002715">
    <property type="entry name" value="Nas_poly-pep-assoc_cplx_dom"/>
</dbReference>
<dbReference type="PANTHER" id="PTHR21713">
    <property type="entry name" value="NASCENT POLYPEPTIDE ASSOCIATED COMPLEX ALPHA SUBUNIT-RELATED"/>
    <property type="match status" value="1"/>
</dbReference>
<dbReference type="Pfam" id="PF01849">
    <property type="entry name" value="NAC"/>
    <property type="match status" value="1"/>
</dbReference>
<dbReference type="Pfam" id="PF19026">
    <property type="entry name" value="UBA_HYPK"/>
    <property type="match status" value="1"/>
</dbReference>
<dbReference type="PIRSF" id="PIRSF015901">
    <property type="entry name" value="NAC_alpha"/>
    <property type="match status" value="1"/>
</dbReference>
<dbReference type="SMART" id="SM01407">
    <property type="entry name" value="NAC"/>
    <property type="match status" value="1"/>
</dbReference>
<dbReference type="PROSITE" id="PS51151">
    <property type="entry name" value="NAC_AB"/>
    <property type="match status" value="1"/>
</dbReference>
<reference key="1">
    <citation type="journal article" date="2005" name="BMC Genomics">
        <title>Characterization of 954 bovine full-CDS cDNA sequences.</title>
        <authorList>
            <person name="Harhay G.P."/>
            <person name="Sonstegard T.S."/>
            <person name="Keele J.W."/>
            <person name="Heaton M.P."/>
            <person name="Clawson M.L."/>
            <person name="Snelling W.M."/>
            <person name="Wiedmann R.T."/>
            <person name="Van Tassell C.P."/>
            <person name="Smith T.P.L."/>
        </authorList>
    </citation>
    <scope>NUCLEOTIDE SEQUENCE [LARGE SCALE MRNA]</scope>
</reference>
<reference key="2">
    <citation type="submission" date="2005-08" db="EMBL/GenBank/DDBJ databases">
        <authorList>
            <consortium name="NIH - Mammalian Gene Collection (MGC) project"/>
        </authorList>
    </citation>
    <scope>NUCLEOTIDE SEQUENCE [LARGE SCALE MRNA]</scope>
    <source>
        <strain>Crossbred X Angus</strain>
        <tissue>Ileum</tissue>
    </source>
</reference>
<reference key="3">
    <citation type="journal article" date="1994" name="Nature">
        <title>A protein complex required for signal-sequence-specific sorting and translocation.</title>
        <authorList>
            <person name="Wiedmann B."/>
            <person name="Sakai H."/>
            <person name="Davis T.A."/>
            <person name="Wiedmann M."/>
        </authorList>
    </citation>
    <scope>FUNCTION</scope>
    <scope>INTERACTION WITH BTF3</scope>
    <scope>ASSOCIATION WITH RIBOSOMES</scope>
</reference>
<reference key="4">
    <citation type="journal article" date="1998" name="FEBS Lett.">
        <title>Unregulated exposure of the ribosomal M-site caused by NAC depletion results in delivery of non-secretory polypeptides to the Sec61 complex.</title>
        <authorList>
            <person name="Moeller I."/>
            <person name="Beatrix B."/>
            <person name="Kreibich G."/>
            <person name="Sakai H."/>
            <person name="Lauring B."/>
            <person name="Wiedmann M."/>
        </authorList>
    </citation>
    <scope>FUNCTION</scope>
</reference>
<reference key="5">
    <citation type="journal article" date="2000" name="J. Biol. Chem.">
        <title>The alpha and beta subunit of the nascent polypeptide-associated complex have distinct functions.</title>
        <authorList>
            <person name="Beatrix B."/>
            <person name="Sakai H."/>
            <person name="Wiedmann M."/>
        </authorList>
    </citation>
    <scope>FUNCTION</scope>
    <scope>INTERACTION WITH BTF3</scope>
    <scope>IDENTIFICATION BY MASS SPECTROMETRY</scope>
</reference>
<evidence type="ECO:0000250" key="1"/>
<evidence type="ECO:0000250" key="2">
    <source>
        <dbReference type="UniProtKB" id="Q13765"/>
    </source>
</evidence>
<evidence type="ECO:0000250" key="3">
    <source>
        <dbReference type="UniProtKB" id="Q60817"/>
    </source>
</evidence>
<evidence type="ECO:0000255" key="4">
    <source>
        <dbReference type="PROSITE-ProRule" id="PRU00507"/>
    </source>
</evidence>
<evidence type="ECO:0000256" key="5">
    <source>
        <dbReference type="SAM" id="MobiDB-lite"/>
    </source>
</evidence>
<evidence type="ECO:0000269" key="6">
    <source>
    </source>
</evidence>
<evidence type="ECO:0000269" key="7">
    <source>
    </source>
</evidence>
<evidence type="ECO:0000269" key="8">
    <source>
    </source>
</evidence>
<evidence type="ECO:0000305" key="9"/>
<name>NACA_BOVIN</name>
<comment type="function">
    <text evidence="6 7 8">Prevents inappropriate targeting of non-secretory polypeptides to the endoplasmic reticulum (ER). Binds to nascent polypeptide chains as they emerge from the ribosome and blocks their interaction with the signal recognition particle (SRP), which normally targets nascent secretory peptides to the ER. Also reduces the inherent affinity of ribosomes for protein translocation sites in the ER membrane (M sites). May act as a specific coactivator for JUN, binding to DNA and stabilizing the interaction of JUN homodimers with target gene promoters.</text>
</comment>
<comment type="subunit">
    <text evidence="1">Part of the nascent polypeptide-associated complex (NAC), which is a heterodimer of NACA and BTF3 (via NAC-A/B domains). NAC associates with ribosomes through the BTF3/NACB subunit and contacts the ribosomal protein L23, which is positioned near the exiting site. Both subunits can contact nascent polypeptide chains. NACA may also form homodimers, and only this form binds DNA. Interacts with TBP and JUN (By similarity).</text>
</comment>
<comment type="subcellular location">
    <subcellularLocation>
        <location evidence="1">Cytoplasm</location>
    </subcellularLocation>
    <subcellularLocation>
        <location evidence="1">Nucleus</location>
    </subcellularLocation>
    <text evidence="1">The heterodimer is located mainly in the cytosol, and the homodimer in the nucleus.</text>
</comment>
<comment type="domain">
    <text evidence="1">The positively charged inner surface of the NAC-A/B domain is crucial for NACA localization in the nucleus and DNA-binding. This region is blocked from binding nucleic acids in the heterodimeric complex by a helix region in the beta-subunit, it also displays much higher affinity for RNA than DNA (By similarity).</text>
</comment>
<comment type="PTM">
    <text>Phosphorylation of Ser-43 by ILK during cell adhesion may promote nuclear localization. Phosphorylation of Thr-159 by GSK3B may promote proteasome mediated degradation.</text>
</comment>
<comment type="similarity">
    <text evidence="9">Belongs to the NAC-alpha family.</text>
</comment>
<sequence length="215" mass="23370">MPGEATDTVPATEQELPQPQAETGSGTESDSDESVPELEEQDSTQATTQQAQLAAAAEIDEEPVSKAKQSRSEKKARKAMSKLGLRQVTGVTRVTIRKSKNILFVITKPDVYKSPASDTYIVFGEAKIEDLSQQAQLAAAEKFKVQGEAVSNIQENTQTPTVQEESEEEEVDETGVEVKDIELVMSQANVSRAKAVRALKNNSNDIVNAIMELTM</sequence>
<proteinExistence type="evidence at protein level"/>
<keyword id="KW-0007">Acetylation</keyword>
<keyword id="KW-0143">Chaperone</keyword>
<keyword id="KW-0963">Cytoplasm</keyword>
<keyword id="KW-0238">DNA-binding</keyword>
<keyword id="KW-1017">Isopeptide bond</keyword>
<keyword id="KW-0539">Nucleus</keyword>
<keyword id="KW-0597">Phosphoprotein</keyword>
<keyword id="KW-0653">Protein transport</keyword>
<keyword id="KW-1185">Reference proteome</keyword>
<keyword id="KW-0804">Transcription</keyword>
<keyword id="KW-0813">Transport</keyword>
<keyword id="KW-0832">Ubl conjugation</keyword>
<accession>Q5E9A1</accession>
<accession>Q3T0K5</accession>
<feature type="chain" id="PRO_0000135574" description="Nascent polypeptide-associated complex subunit alpha">
    <location>
        <begin position="1"/>
        <end position="215"/>
    </location>
</feature>
<feature type="domain" description="NAC-A/B" evidence="4">
    <location>
        <begin position="70"/>
        <end position="135"/>
    </location>
</feature>
<feature type="domain" description="UBA">
    <location>
        <begin position="176"/>
        <end position="213"/>
    </location>
</feature>
<feature type="region of interest" description="Disordered" evidence="5">
    <location>
        <begin position="1"/>
        <end position="81"/>
    </location>
</feature>
<feature type="region of interest" description="Required for DNA-binding" evidence="1">
    <location>
        <begin position="69"/>
        <end position="80"/>
    </location>
</feature>
<feature type="region of interest" description="RNA/DNA-binding" evidence="1">
    <location>
        <begin position="93"/>
        <end position="108"/>
    </location>
</feature>
<feature type="compositionally biased region" description="Polar residues" evidence="5">
    <location>
        <begin position="9"/>
        <end position="28"/>
    </location>
</feature>
<feature type="compositionally biased region" description="Acidic residues" evidence="5">
    <location>
        <begin position="29"/>
        <end position="42"/>
    </location>
</feature>
<feature type="compositionally biased region" description="Low complexity" evidence="5">
    <location>
        <begin position="44"/>
        <end position="57"/>
    </location>
</feature>
<feature type="modified residue" description="Phosphoserine; by ILK1" evidence="2">
    <location>
        <position position="43"/>
    </location>
</feature>
<feature type="modified residue" description="Phosphoserine" evidence="2">
    <location>
        <position position="132"/>
    </location>
</feature>
<feature type="modified residue" description="N6-acetyllysine; alternate" evidence="2">
    <location>
        <position position="142"/>
    </location>
</feature>
<feature type="modified residue" description="Phosphothreonine; by GSK3-beta" evidence="3">
    <location>
        <position position="159"/>
    </location>
</feature>
<feature type="modified residue" description="Phosphothreonine" evidence="2">
    <location>
        <position position="161"/>
    </location>
</feature>
<feature type="modified residue" description="Phosphoserine" evidence="2">
    <location>
        <position position="166"/>
    </location>
</feature>
<feature type="modified residue" description="Phosphoserine" evidence="2">
    <location>
        <position position="186"/>
    </location>
</feature>
<feature type="modified residue" description="Phosphoserine" evidence="2">
    <location>
        <position position="191"/>
    </location>
</feature>
<feature type="modified residue" description="Phosphoserine" evidence="2">
    <location>
        <position position="203"/>
    </location>
</feature>
<feature type="cross-link" description="Glycyl lysine isopeptide (Lys-Gly) (interchain with G-Cter in SUMO2); alternate" evidence="2">
    <location>
        <position position="142"/>
    </location>
</feature>
<gene>
    <name type="primary">NACA</name>
</gene>